<gene>
    <name type="ordered locus">bbp_529</name>
</gene>
<keyword id="KW-1185">Reference proteome</keyword>
<feature type="chain" id="PRO_0000216263" description="Uncharacterized protein bbp_529">
    <location>
        <begin position="1"/>
        <end position="398"/>
    </location>
</feature>
<dbReference type="EMBL" id="AE016826">
    <property type="protein sequence ID" value="AAO27231.1"/>
    <property type="molecule type" value="Genomic_DNA"/>
</dbReference>
<dbReference type="RefSeq" id="WP_011091632.1">
    <property type="nucleotide sequence ID" value="NC_004545.1"/>
</dbReference>
<dbReference type="KEGG" id="bab:bbp_529"/>
<dbReference type="eggNOG" id="ENOG502ZKGP">
    <property type="taxonomic scope" value="Bacteria"/>
</dbReference>
<dbReference type="HOGENOM" id="CLU_692010_0_0_6"/>
<dbReference type="OrthoDB" id="6553087at2"/>
<dbReference type="Proteomes" id="UP000000601">
    <property type="component" value="Chromosome"/>
</dbReference>
<proteinExistence type="predicted"/>
<protein>
    <recommendedName>
        <fullName>Uncharacterized protein bbp_529</fullName>
    </recommendedName>
    <alternativeName>
        <fullName>yba3</fullName>
    </alternativeName>
</protein>
<organism>
    <name type="scientific">Buchnera aphidicola subsp. Baizongia pistaciae (strain Bp)</name>
    <dbReference type="NCBI Taxonomy" id="224915"/>
    <lineage>
        <taxon>Bacteria</taxon>
        <taxon>Pseudomonadati</taxon>
        <taxon>Pseudomonadota</taxon>
        <taxon>Gammaproteobacteria</taxon>
        <taxon>Enterobacterales</taxon>
        <taxon>Erwiniaceae</taxon>
        <taxon>Buchnera</taxon>
    </lineage>
</organism>
<sequence length="398" mass="44846">MSSMSVVDNVQLVDVNKKTHPQAILIQNDKFNNENLNDSVLSDIDSNEIVKLQYKTRSNDGNAVYAELPPNQLIDFEVGPVMQNSSNFSFSEEAVNQPSIFQRVSEFFAPIYAFLKDLLPSFDSITNAAKSVEDFGVSAYQTGKDIVCDSVDAIGDMGKSAFDYTVDFGKSIFSAVVNFFSGDSSTLDLGEENTEKKFEGSIPSNLHRVSREIHQSLMSNEISKPYWKSLNKIIGDNQQVSTGKKFFNRFMSLRNTSRLDDSFIFEGEHSILQINGQQVSKYSPKTMLDDFKTAIPDLASRQLISSFSHQGIFSQPYIELFSEHPDLVKFKPKDSQFSYVVHEVEDGVFQFTATSQADLESSYETSDHKKYNAFGVQVSMTLSKDKSPEDVEYSYYLR</sequence>
<accession>Q89A26</accession>
<reference key="1">
    <citation type="journal article" date="2003" name="Proc. Natl. Acad. Sci. U.S.A.">
        <title>Reductive genome evolution in Buchnera aphidicola.</title>
        <authorList>
            <person name="van Ham R.C.H.J."/>
            <person name="Kamerbeek J."/>
            <person name="Palacios C."/>
            <person name="Rausell C."/>
            <person name="Abascal F."/>
            <person name="Bastolla U."/>
            <person name="Fernandez J.M."/>
            <person name="Jimenez L."/>
            <person name="Postigo M."/>
            <person name="Silva F.J."/>
            <person name="Tamames J."/>
            <person name="Viguera E."/>
            <person name="Latorre A."/>
            <person name="Valencia A."/>
            <person name="Moran F."/>
            <person name="Moya A."/>
        </authorList>
    </citation>
    <scope>NUCLEOTIDE SEQUENCE [LARGE SCALE GENOMIC DNA]</scope>
    <source>
        <strain>Bp</strain>
    </source>
</reference>
<name>Y529_BUCBP</name>